<organism>
    <name type="scientific">Aromatoleum aromaticum (strain DSM 19018 / LMG 30748 / EbN1)</name>
    <name type="common">Azoarcus sp. (strain EbN1)</name>
    <dbReference type="NCBI Taxonomy" id="76114"/>
    <lineage>
        <taxon>Bacteria</taxon>
        <taxon>Pseudomonadati</taxon>
        <taxon>Pseudomonadota</taxon>
        <taxon>Betaproteobacteria</taxon>
        <taxon>Rhodocyclales</taxon>
        <taxon>Rhodocyclaceae</taxon>
        <taxon>Aromatoleum</taxon>
    </lineage>
</organism>
<feature type="chain" id="PRO_0000140538" description="Chorismate synthase">
    <location>
        <begin position="1"/>
        <end position="377"/>
    </location>
</feature>
<feature type="binding site" evidence="1">
    <location>
        <position position="48"/>
    </location>
    <ligand>
        <name>NADP(+)</name>
        <dbReference type="ChEBI" id="CHEBI:58349"/>
    </ligand>
</feature>
<feature type="binding site" evidence="1">
    <location>
        <position position="54"/>
    </location>
    <ligand>
        <name>NADP(+)</name>
        <dbReference type="ChEBI" id="CHEBI:58349"/>
    </ligand>
</feature>
<feature type="binding site" evidence="1">
    <location>
        <begin position="125"/>
        <end position="127"/>
    </location>
    <ligand>
        <name>FMN</name>
        <dbReference type="ChEBI" id="CHEBI:58210"/>
    </ligand>
</feature>
<feature type="binding site" evidence="1">
    <location>
        <begin position="238"/>
        <end position="239"/>
    </location>
    <ligand>
        <name>FMN</name>
        <dbReference type="ChEBI" id="CHEBI:58210"/>
    </ligand>
</feature>
<feature type="binding site" evidence="1">
    <location>
        <position position="278"/>
    </location>
    <ligand>
        <name>FMN</name>
        <dbReference type="ChEBI" id="CHEBI:58210"/>
    </ligand>
</feature>
<feature type="binding site" evidence="1">
    <location>
        <begin position="293"/>
        <end position="297"/>
    </location>
    <ligand>
        <name>FMN</name>
        <dbReference type="ChEBI" id="CHEBI:58210"/>
    </ligand>
</feature>
<feature type="binding site" evidence="1">
    <location>
        <position position="319"/>
    </location>
    <ligand>
        <name>FMN</name>
        <dbReference type="ChEBI" id="CHEBI:58210"/>
    </ligand>
</feature>
<evidence type="ECO:0000255" key="1">
    <source>
        <dbReference type="HAMAP-Rule" id="MF_00300"/>
    </source>
</evidence>
<protein>
    <recommendedName>
        <fullName evidence="1">Chorismate synthase</fullName>
        <shortName evidence="1">CS</shortName>
        <ecNumber evidence="1">4.2.3.5</ecNumber>
    </recommendedName>
    <alternativeName>
        <fullName evidence="1">5-enolpyruvylshikimate-3-phosphate phospholyase</fullName>
    </alternativeName>
</protein>
<sequence>MSGNSLGKLFCVTSFGESHGPAIGCVVDGCPPGMPISTQEIQVELDRRKPGTSRHVTQRREPDEVEILSGVFEGVTTGTPIALLIRNQDQRSRDYGNIAETFRPGHADYAYWQKYGIRDHRGGGRSSARETAVRVAAGAIARKWLNQQYGVVIRGFMSQLGPIEIPFVDWDEVGRNPFFAPNASIVPALEDYMDELRKSGDSVGARIDVVASGVPVGWGEPVYDRLDADIAYAMMGINAVKGVEIGAGFSSVAQRGTEHSDEMTPEGFLSNNAGGVLGGISTGQDILVSMAVKPTSSIRLDRRSIDKQGDAVVINTHGRHDPCVGIRATPIAEAMLAIVLMDHALRHRAQCGDVSCATPKLARLAPSGVQRVPAPPR</sequence>
<dbReference type="EC" id="4.2.3.5" evidence="1"/>
<dbReference type="EMBL" id="CR555306">
    <property type="protein sequence ID" value="CAI08813.1"/>
    <property type="molecule type" value="Genomic_DNA"/>
</dbReference>
<dbReference type="RefSeq" id="WP_011238496.1">
    <property type="nucleotide sequence ID" value="NC_006513.1"/>
</dbReference>
<dbReference type="SMR" id="Q5P1K1"/>
<dbReference type="STRING" id="76114.ebA4753"/>
<dbReference type="KEGG" id="eba:ebA4753"/>
<dbReference type="eggNOG" id="COG0082">
    <property type="taxonomic scope" value="Bacteria"/>
</dbReference>
<dbReference type="HOGENOM" id="CLU_034547_0_2_4"/>
<dbReference type="OrthoDB" id="9771806at2"/>
<dbReference type="UniPathway" id="UPA00053">
    <property type="reaction ID" value="UER00090"/>
</dbReference>
<dbReference type="Proteomes" id="UP000006552">
    <property type="component" value="Chromosome"/>
</dbReference>
<dbReference type="GO" id="GO:0005829">
    <property type="term" value="C:cytosol"/>
    <property type="evidence" value="ECO:0007669"/>
    <property type="project" value="TreeGrafter"/>
</dbReference>
<dbReference type="GO" id="GO:0004107">
    <property type="term" value="F:chorismate synthase activity"/>
    <property type="evidence" value="ECO:0007669"/>
    <property type="project" value="UniProtKB-UniRule"/>
</dbReference>
<dbReference type="GO" id="GO:0010181">
    <property type="term" value="F:FMN binding"/>
    <property type="evidence" value="ECO:0007669"/>
    <property type="project" value="TreeGrafter"/>
</dbReference>
<dbReference type="GO" id="GO:0008652">
    <property type="term" value="P:amino acid biosynthetic process"/>
    <property type="evidence" value="ECO:0007669"/>
    <property type="project" value="UniProtKB-KW"/>
</dbReference>
<dbReference type="GO" id="GO:0009073">
    <property type="term" value="P:aromatic amino acid family biosynthetic process"/>
    <property type="evidence" value="ECO:0007669"/>
    <property type="project" value="UniProtKB-KW"/>
</dbReference>
<dbReference type="GO" id="GO:0009423">
    <property type="term" value="P:chorismate biosynthetic process"/>
    <property type="evidence" value="ECO:0007669"/>
    <property type="project" value="UniProtKB-UniRule"/>
</dbReference>
<dbReference type="CDD" id="cd07304">
    <property type="entry name" value="Chorismate_synthase"/>
    <property type="match status" value="1"/>
</dbReference>
<dbReference type="FunFam" id="3.60.150.10:FF:000001">
    <property type="entry name" value="Chorismate synthase"/>
    <property type="match status" value="1"/>
</dbReference>
<dbReference type="Gene3D" id="3.60.150.10">
    <property type="entry name" value="Chorismate synthase AroC"/>
    <property type="match status" value="1"/>
</dbReference>
<dbReference type="HAMAP" id="MF_00300">
    <property type="entry name" value="Chorismate_synth"/>
    <property type="match status" value="1"/>
</dbReference>
<dbReference type="InterPro" id="IPR000453">
    <property type="entry name" value="Chorismate_synth"/>
</dbReference>
<dbReference type="InterPro" id="IPR035904">
    <property type="entry name" value="Chorismate_synth_AroC_sf"/>
</dbReference>
<dbReference type="InterPro" id="IPR020541">
    <property type="entry name" value="Chorismate_synthase_CS"/>
</dbReference>
<dbReference type="NCBIfam" id="TIGR00033">
    <property type="entry name" value="aroC"/>
    <property type="match status" value="1"/>
</dbReference>
<dbReference type="NCBIfam" id="NF003793">
    <property type="entry name" value="PRK05382.1"/>
    <property type="match status" value="1"/>
</dbReference>
<dbReference type="PANTHER" id="PTHR21085">
    <property type="entry name" value="CHORISMATE SYNTHASE"/>
    <property type="match status" value="1"/>
</dbReference>
<dbReference type="PANTHER" id="PTHR21085:SF0">
    <property type="entry name" value="CHORISMATE SYNTHASE"/>
    <property type="match status" value="1"/>
</dbReference>
<dbReference type="Pfam" id="PF01264">
    <property type="entry name" value="Chorismate_synt"/>
    <property type="match status" value="1"/>
</dbReference>
<dbReference type="PIRSF" id="PIRSF001456">
    <property type="entry name" value="Chorismate_synth"/>
    <property type="match status" value="1"/>
</dbReference>
<dbReference type="SUPFAM" id="SSF103263">
    <property type="entry name" value="Chorismate synthase, AroC"/>
    <property type="match status" value="1"/>
</dbReference>
<dbReference type="PROSITE" id="PS00787">
    <property type="entry name" value="CHORISMATE_SYNTHASE_1"/>
    <property type="match status" value="1"/>
</dbReference>
<dbReference type="PROSITE" id="PS00788">
    <property type="entry name" value="CHORISMATE_SYNTHASE_2"/>
    <property type="match status" value="1"/>
</dbReference>
<dbReference type="PROSITE" id="PS00789">
    <property type="entry name" value="CHORISMATE_SYNTHASE_3"/>
    <property type="match status" value="1"/>
</dbReference>
<reference key="1">
    <citation type="journal article" date="2005" name="Arch. Microbiol.">
        <title>The genome sequence of an anaerobic aromatic-degrading denitrifying bacterium, strain EbN1.</title>
        <authorList>
            <person name="Rabus R."/>
            <person name="Kube M."/>
            <person name="Heider J."/>
            <person name="Beck A."/>
            <person name="Heitmann K."/>
            <person name="Widdel F."/>
            <person name="Reinhardt R."/>
        </authorList>
    </citation>
    <scope>NUCLEOTIDE SEQUENCE [LARGE SCALE GENOMIC DNA]</scope>
    <source>
        <strain>DSM 19018 / LMG 30748 / EbN1</strain>
    </source>
</reference>
<accession>Q5P1K1</accession>
<gene>
    <name evidence="1" type="primary">aroC</name>
    <name type="ordered locus">AZOSEA26880</name>
    <name type="ORF">ebA4753</name>
</gene>
<proteinExistence type="inferred from homology"/>
<name>AROC_AROAE</name>
<keyword id="KW-0028">Amino-acid biosynthesis</keyword>
<keyword id="KW-0057">Aromatic amino acid biosynthesis</keyword>
<keyword id="KW-0274">FAD</keyword>
<keyword id="KW-0285">Flavoprotein</keyword>
<keyword id="KW-0288">FMN</keyword>
<keyword id="KW-0456">Lyase</keyword>
<keyword id="KW-0521">NADP</keyword>
<keyword id="KW-1185">Reference proteome</keyword>
<comment type="function">
    <text evidence="1">Catalyzes the anti-1,4-elimination of the C-3 phosphate and the C-6 proR hydrogen from 5-enolpyruvylshikimate-3-phosphate (EPSP) to yield chorismate, which is the branch point compound that serves as the starting substrate for the three terminal pathways of aromatic amino acid biosynthesis. This reaction introduces a second double bond into the aromatic ring system.</text>
</comment>
<comment type="catalytic activity">
    <reaction evidence="1">
        <text>5-O-(1-carboxyvinyl)-3-phosphoshikimate = chorismate + phosphate</text>
        <dbReference type="Rhea" id="RHEA:21020"/>
        <dbReference type="ChEBI" id="CHEBI:29748"/>
        <dbReference type="ChEBI" id="CHEBI:43474"/>
        <dbReference type="ChEBI" id="CHEBI:57701"/>
        <dbReference type="EC" id="4.2.3.5"/>
    </reaction>
</comment>
<comment type="cofactor">
    <cofactor evidence="1">
        <name>FMNH2</name>
        <dbReference type="ChEBI" id="CHEBI:57618"/>
    </cofactor>
    <text evidence="1">Reduced FMN (FMNH(2)).</text>
</comment>
<comment type="pathway">
    <text evidence="1">Metabolic intermediate biosynthesis; chorismate biosynthesis; chorismate from D-erythrose 4-phosphate and phosphoenolpyruvate: step 7/7.</text>
</comment>
<comment type="subunit">
    <text evidence="1">Homotetramer.</text>
</comment>
<comment type="similarity">
    <text evidence="1">Belongs to the chorismate synthase family.</text>
</comment>